<keyword id="KW-1015">Disulfide bond</keyword>
<keyword id="KW-0378">Hydrolase</keyword>
<keyword id="KW-0442">Lipid degradation</keyword>
<keyword id="KW-0443">Lipid metabolism</keyword>
<keyword id="KW-0479">Metal-binding</keyword>
<keyword id="KW-0964">Secreted</keyword>
<keyword id="KW-0732">Signal</keyword>
<organism>
    <name type="scientific">Malassezia restricta</name>
    <name type="common">Seborrheic dermatitis infection agent</name>
    <dbReference type="NCBI Taxonomy" id="76775"/>
    <lineage>
        <taxon>Eukaryota</taxon>
        <taxon>Fungi</taxon>
        <taxon>Dikarya</taxon>
        <taxon>Basidiomycota</taxon>
        <taxon>Ustilaginomycotina</taxon>
        <taxon>Malasseziomycetes</taxon>
        <taxon>Malasseziales</taxon>
        <taxon>Malasseziaceae</taxon>
        <taxon>Malassezia</taxon>
    </lineage>
</organism>
<name>LIP4_MALRS</name>
<dbReference type="EC" id="3.1.1.-" evidence="6"/>
<dbReference type="EMBL" id="CP030257">
    <property type="protein sequence ID" value="AXA52058.1"/>
    <property type="molecule type" value="Genomic_DNA"/>
</dbReference>
<dbReference type="SMR" id="A0A8R9Z5V5"/>
<dbReference type="OrthoDB" id="426718at2759"/>
<dbReference type="GO" id="GO:0005576">
    <property type="term" value="C:extracellular region"/>
    <property type="evidence" value="ECO:0007669"/>
    <property type="project" value="UniProtKB-SubCell"/>
</dbReference>
<dbReference type="GO" id="GO:0016787">
    <property type="term" value="F:hydrolase activity"/>
    <property type="evidence" value="ECO:0007669"/>
    <property type="project" value="UniProtKB-KW"/>
</dbReference>
<dbReference type="GO" id="GO:0046872">
    <property type="term" value="F:metal ion binding"/>
    <property type="evidence" value="ECO:0007669"/>
    <property type="project" value="UniProtKB-KW"/>
</dbReference>
<dbReference type="GO" id="GO:0016042">
    <property type="term" value="P:lipid catabolic process"/>
    <property type="evidence" value="ECO:0007669"/>
    <property type="project" value="UniProtKB-KW"/>
</dbReference>
<dbReference type="CDD" id="cd00519">
    <property type="entry name" value="Lipase_3"/>
    <property type="match status" value="1"/>
</dbReference>
<dbReference type="Gene3D" id="3.40.50.1820">
    <property type="entry name" value="alpha/beta hydrolase"/>
    <property type="match status" value="1"/>
</dbReference>
<dbReference type="InterPro" id="IPR029058">
    <property type="entry name" value="AB_hydrolase_fold"/>
</dbReference>
<dbReference type="InterPro" id="IPR002921">
    <property type="entry name" value="Fungal_lipase-type"/>
</dbReference>
<dbReference type="InterPro" id="IPR051218">
    <property type="entry name" value="Sec_MonoDiacylglyc_Lipase"/>
</dbReference>
<dbReference type="PANTHER" id="PTHR45856">
    <property type="entry name" value="ALPHA/BETA-HYDROLASES SUPERFAMILY PROTEIN"/>
    <property type="match status" value="1"/>
</dbReference>
<dbReference type="PANTHER" id="PTHR45856:SF24">
    <property type="entry name" value="FUNGAL LIPASE-LIKE DOMAIN-CONTAINING PROTEIN"/>
    <property type="match status" value="1"/>
</dbReference>
<dbReference type="Pfam" id="PF01764">
    <property type="entry name" value="Lipase_3"/>
    <property type="match status" value="1"/>
</dbReference>
<dbReference type="SUPFAM" id="SSF53474">
    <property type="entry name" value="alpha/beta-Hydrolases"/>
    <property type="match status" value="1"/>
</dbReference>
<reference key="1">
    <citation type="journal article" date="2017" name="Mycoses">
        <title>Whole genome sequencing analysis of the cutaneous pathogenic yeast Malassezia restricta and identification of the major lipase expressed on the scalp of patients with dandruff.</title>
        <authorList>
            <person name="Park M."/>
            <person name="Cho Y.J."/>
            <person name="Lee Y.W."/>
            <person name="Jung W.H."/>
        </authorList>
    </citation>
    <scope>NUCLEOTIDE SEQUENCE [LARGE SCALE GENOMIC DNA]</scope>
    <source>
        <strain>KCTC 27527</strain>
    </source>
</reference>
<reference key="2">
    <citation type="journal article" date="2015" name="FEMS Yeast Res.">
        <title>Identification and characterization of lipases from Malassezia restricta, a causative agent of dandruff.</title>
        <authorList>
            <person name="Sommer B."/>
            <person name="Overy D.P."/>
            <person name="Kerr R.G."/>
        </authorList>
    </citation>
    <scope>FUNCTION</scope>
    <scope>CATALYTIC ACTIVITY</scope>
</reference>
<evidence type="ECO:0000250" key="1">
    <source>
        <dbReference type="UniProtKB" id="A8PUY1"/>
    </source>
</evidence>
<evidence type="ECO:0000255" key="2"/>
<evidence type="ECO:0000255" key="3">
    <source>
        <dbReference type="PROSITE-ProRule" id="PRU10037"/>
    </source>
</evidence>
<evidence type="ECO:0000303" key="4">
    <source>
    </source>
</evidence>
<evidence type="ECO:0000305" key="5"/>
<evidence type="ECO:0000305" key="6">
    <source>
    </source>
</evidence>
<sequence>MRFLAFLLCLVPLALCIIEPRGIDGPTSHEAPTDLPIDWHILSQAAGMAHEPYCLFGDIGDRVGDAEVLWSKGHGVVIQRVKIFHSKSLGVTVSFEGTTASLLSILHDVNAALIDPPKEVAPAYCEGVKLFAGFSNAYMELRDEVYEQIVKFQKQFNDKRVTTTGHSLGAAMAVLAAMDLNKRLDDGIYRSFAFGMPRTGNGAFANDVDKKIGGRFFYIVNGRDWVPRVLPRELGFQHPSGQIWINPPSTTHWKYYPGQENHYGANSEDPILTFDDHHGIYFHTGLGHGPGKCPASVGTA</sequence>
<feature type="signal peptide" evidence="2">
    <location>
        <begin position="1"/>
        <end position="16"/>
    </location>
</feature>
<feature type="chain" id="PRO_5035721562" description="Secreted mono- and diacylglycerol lipase LIP4">
    <location>
        <begin position="17"/>
        <end position="300"/>
    </location>
</feature>
<feature type="active site" description="Nucleophile" evidence="3">
    <location>
        <position position="167"/>
    </location>
</feature>
<feature type="active site" evidence="1">
    <location>
        <position position="224"/>
    </location>
</feature>
<feature type="disulfide bond" evidence="1">
    <location>
        <begin position="54"/>
        <end position="293"/>
    </location>
</feature>
<comment type="function">
    <text evidence="6">Secreted lipase involved in Dandruff and seborrheic dermatitis (D/SD) probably via lipase-mediated breakdown of sebaceous lipids and release of irritating free fatty acids (Probable). Shows activity against monoglyceride and diglyceride substrates (Probable). Due to an absence of fatty acid synthase genes in Malassezia species, secretory lipases are essential for the yeast to generate free fatty acids from degradation of sebum and assimilate them as lipid sources for growth (Probable). Plays an essential role at the pathogen-host interface during disease progression (Probable).</text>
</comment>
<comment type="catalytic activity">
    <reaction evidence="6">
        <text>a monoacylglycerol + H2O = glycerol + a fatty acid + H(+)</text>
        <dbReference type="Rhea" id="RHEA:15245"/>
        <dbReference type="ChEBI" id="CHEBI:15377"/>
        <dbReference type="ChEBI" id="CHEBI:15378"/>
        <dbReference type="ChEBI" id="CHEBI:17408"/>
        <dbReference type="ChEBI" id="CHEBI:17754"/>
        <dbReference type="ChEBI" id="CHEBI:28868"/>
    </reaction>
</comment>
<comment type="catalytic activity">
    <reaction evidence="6">
        <text>a diacylglycerol + H2O = a monoacylglycerol + a fatty acid + H(+)</text>
        <dbReference type="Rhea" id="RHEA:32731"/>
        <dbReference type="ChEBI" id="CHEBI:15377"/>
        <dbReference type="ChEBI" id="CHEBI:15378"/>
        <dbReference type="ChEBI" id="CHEBI:17408"/>
        <dbReference type="ChEBI" id="CHEBI:18035"/>
        <dbReference type="ChEBI" id="CHEBI:28868"/>
    </reaction>
</comment>
<comment type="subcellular location">
    <subcellularLocation>
        <location evidence="6">Secreted</location>
    </subcellularLocation>
</comment>
<comment type="similarity">
    <text evidence="5">Belongs to the AB hydrolase superfamily. Lipase family. Class 3 subfamily.</text>
</comment>
<gene>
    <name evidence="4" type="primary">LIP4</name>
    <name type="ORF">MRET_3772</name>
</gene>
<accession>A0A8R9Z5V5</accession>
<protein>
    <recommendedName>
        <fullName evidence="4">Secreted mono- and diacylglycerol lipase LIP4</fullName>
        <ecNumber evidence="6">3.1.1.-</ecNumber>
    </recommendedName>
</protein>
<proteinExistence type="evidence at protein level"/>